<dbReference type="EMBL" id="AF215115">
    <property type="protein sequence ID" value="AAG60531.1"/>
    <property type="molecule type" value="mRNA"/>
</dbReference>
<dbReference type="SMR" id="Q9BP47"/>
<dbReference type="ConoServer" id="1557">
    <property type="toxin name" value="Ar5.4 precursor"/>
</dbReference>
<dbReference type="GO" id="GO:0005576">
    <property type="term" value="C:extracellular region"/>
    <property type="evidence" value="ECO:0007669"/>
    <property type="project" value="UniProtKB-SubCell"/>
</dbReference>
<dbReference type="GO" id="GO:0090729">
    <property type="term" value="F:toxin activity"/>
    <property type="evidence" value="ECO:0007669"/>
    <property type="project" value="UniProtKB-KW"/>
</dbReference>
<feature type="propeptide" id="PRO_0000404956" evidence="1">
    <location>
        <begin position="1" status="less than"/>
        <end position="20"/>
    </location>
</feature>
<feature type="peptide" id="PRO_0000404957" description="Conotoxin Ar5.4" evidence="1">
    <location>
        <begin position="21"/>
        <end position="58"/>
    </location>
</feature>
<feature type="non-terminal residue">
    <location>
        <position position="1"/>
    </location>
</feature>
<proteinExistence type="evidence at transcript level"/>
<reference key="1">
    <citation type="journal article" date="2001" name="Mol. Biol. Evol.">
        <title>Mechanisms for evolving hypervariability: the case of conopeptides.</title>
        <authorList>
            <person name="Conticello S.G."/>
            <person name="Gilad Y."/>
            <person name="Avidan N."/>
            <person name="Ben-Asher E."/>
            <person name="Levy Z."/>
            <person name="Fainzilber M."/>
        </authorList>
    </citation>
    <scope>NUCLEOTIDE SEQUENCE [MRNA]</scope>
    <source>
        <tissue>Venom duct</tissue>
    </source>
</reference>
<name>CT54_CONAE</name>
<protein>
    <recommendedName>
        <fullName evidence="2">Conotoxin Ar5.4</fullName>
    </recommendedName>
    <alternativeName>
        <fullName evidence="4">Conotoxin ArMLCL-D02173</fullName>
    </alternativeName>
</protein>
<evidence type="ECO:0000255" key="1"/>
<evidence type="ECO:0000305" key="2"/>
<evidence type="ECO:0000305" key="3">
    <source>
    </source>
</evidence>
<evidence type="ECO:0000312" key="4">
    <source>
        <dbReference type="EMBL" id="AAG60531.1"/>
    </source>
</evidence>
<comment type="subcellular location">
    <subcellularLocation>
        <location evidence="3">Secreted</location>
    </subcellularLocation>
</comment>
<comment type="tissue specificity">
    <text evidence="3">Expressed by the venom duct.</text>
</comment>
<comment type="domain">
    <text evidence="2">The cysteine framework is V (CC-CC).</text>
</comment>
<comment type="PTM">
    <text evidence="2">Contains 2 disulfide bonds that can be either 'C1-C3, C2-C4' or 'C1-C4, C2-C3', since these disulfide connectivities have been observed for conotoxins with cysteine framework V (for examples, see AC P0DQQ7 and AC P81755).</text>
</comment>
<comment type="similarity">
    <text evidence="2">Belongs to the conotoxin T superfamily.</text>
</comment>
<keyword id="KW-1015">Disulfide bond</keyword>
<keyword id="KW-0528">Neurotoxin</keyword>
<keyword id="KW-0964">Secreted</keyword>
<keyword id="KW-0800">Toxin</keyword>
<organism>
    <name type="scientific">Conus arenatus</name>
    <name type="common">Sand-dusted cone</name>
    <dbReference type="NCBI Taxonomy" id="89451"/>
    <lineage>
        <taxon>Eukaryota</taxon>
        <taxon>Metazoa</taxon>
        <taxon>Spiralia</taxon>
        <taxon>Lophotrochozoa</taxon>
        <taxon>Mollusca</taxon>
        <taxon>Gastropoda</taxon>
        <taxon>Caenogastropoda</taxon>
        <taxon>Neogastropoda</taxon>
        <taxon>Conoidea</taxon>
        <taxon>Conidae</taxon>
        <taxon>Conus</taxon>
    </lineage>
</organism>
<sequence length="58" mass="6273">RIQSDLIRAALEDADMKNEKNILSSIMGSLGTIGNVVGNVCCSITKSCCASWLFPRLE</sequence>
<accession>Q9BP47</accession>